<reference key="1">
    <citation type="journal article" date="2004" name="Proc. Natl. Acad. Sci. U.S.A.">
        <title>Comparison of the genome of the oral pathogen Treponema denticola with other spirochete genomes.</title>
        <authorList>
            <person name="Seshadri R."/>
            <person name="Myers G.S.A."/>
            <person name="Tettelin H."/>
            <person name="Eisen J.A."/>
            <person name="Heidelberg J.F."/>
            <person name="Dodson R.J."/>
            <person name="Davidsen T.M."/>
            <person name="DeBoy R.T."/>
            <person name="Fouts D.E."/>
            <person name="Haft D.H."/>
            <person name="Selengut J."/>
            <person name="Ren Q."/>
            <person name="Brinkac L.M."/>
            <person name="Madupu R."/>
            <person name="Kolonay J.F."/>
            <person name="Durkin S.A."/>
            <person name="Daugherty S.C."/>
            <person name="Shetty J."/>
            <person name="Shvartsbeyn A."/>
            <person name="Gebregeorgis E."/>
            <person name="Geer K."/>
            <person name="Tsegaye G."/>
            <person name="Malek J.A."/>
            <person name="Ayodeji B."/>
            <person name="Shatsman S."/>
            <person name="McLeod M.P."/>
            <person name="Smajs D."/>
            <person name="Howell J.K."/>
            <person name="Pal S."/>
            <person name="Amin A."/>
            <person name="Vashisth P."/>
            <person name="McNeill T.Z."/>
            <person name="Xiang Q."/>
            <person name="Sodergren E."/>
            <person name="Baca E."/>
            <person name="Weinstock G.M."/>
            <person name="Norris S.J."/>
            <person name="Fraser C.M."/>
            <person name="Paulsen I.T."/>
        </authorList>
    </citation>
    <scope>NUCLEOTIDE SEQUENCE [LARGE SCALE GENOMIC DNA]</scope>
    <source>
        <strain>ATCC 35405 / DSM 14222 / CIP 103919 / JCM 8153 / KCTC 15104</strain>
    </source>
</reference>
<evidence type="ECO:0000255" key="1">
    <source>
        <dbReference type="HAMAP-Rule" id="MF_00093"/>
    </source>
</evidence>
<evidence type="ECO:0000256" key="2">
    <source>
        <dbReference type="SAM" id="MobiDB-lite"/>
    </source>
</evidence>
<gene>
    <name evidence="1" type="primary">prfA</name>
    <name type="ordered locus">TDE_2489</name>
</gene>
<feature type="chain" id="PRO_0000263386" description="Peptide chain release factor 1">
    <location>
        <begin position="1"/>
        <end position="361"/>
    </location>
</feature>
<feature type="region of interest" description="Disordered" evidence="2">
    <location>
        <begin position="282"/>
        <end position="310"/>
    </location>
</feature>
<feature type="modified residue" description="N5-methylglutamine" evidence="1">
    <location>
        <position position="233"/>
    </location>
</feature>
<name>RF1_TREDE</name>
<sequence>MKERLDNLRKRLVEVEKEVENPNLIKDVAKYKETMREHSYLSKLMEEYDNYLSIEKQIEDSKLLIQEESDAELKEMAREELHSLEAAFEKSEADLKMLLIPPDPLEEKNIIMEIRGGTGGDEAALFAADLFRMYTHYAEMKNWKYEVLSLNETELGGYKEITFSISGKYVYGSLRYESGVHRVQRVPETEGSGRIHTSAVTVAVLPEAEETEIEINQEDLRIDVMRAGGPGGQCVNTTDSAVRITHIPTGLVVICQDEKSQIKNKAKAMRVLRSRLYDLEESKKQAERAQNRKSQVGSGDRSERIRTYNFPQNRVTDHRINLTLYKLDAVMQGSLDELIDALCIAAREEMMKAADHHLEHK</sequence>
<comment type="function">
    <text evidence="1">Peptide chain release factor 1 directs the termination of translation in response to the peptide chain termination codons UAG and UAA.</text>
</comment>
<comment type="subcellular location">
    <subcellularLocation>
        <location evidence="1">Cytoplasm</location>
    </subcellularLocation>
</comment>
<comment type="PTM">
    <text evidence="1">Methylated by PrmC. Methylation increases the termination efficiency of RF1.</text>
</comment>
<comment type="similarity">
    <text evidence="1">Belongs to the prokaryotic/mitochondrial release factor family.</text>
</comment>
<organism>
    <name type="scientific">Treponema denticola (strain ATCC 35405 / DSM 14222 / CIP 103919 / JCM 8153 / KCTC 15104)</name>
    <dbReference type="NCBI Taxonomy" id="243275"/>
    <lineage>
        <taxon>Bacteria</taxon>
        <taxon>Pseudomonadati</taxon>
        <taxon>Spirochaetota</taxon>
        <taxon>Spirochaetia</taxon>
        <taxon>Spirochaetales</taxon>
        <taxon>Treponemataceae</taxon>
        <taxon>Treponema</taxon>
    </lineage>
</organism>
<keyword id="KW-0963">Cytoplasm</keyword>
<keyword id="KW-0488">Methylation</keyword>
<keyword id="KW-0648">Protein biosynthesis</keyword>
<keyword id="KW-1185">Reference proteome</keyword>
<proteinExistence type="inferred from homology"/>
<dbReference type="EMBL" id="AE017226">
    <property type="protein sequence ID" value="AAS13006.1"/>
    <property type="molecule type" value="Genomic_DNA"/>
</dbReference>
<dbReference type="RefSeq" id="NP_973087.1">
    <property type="nucleotide sequence ID" value="NC_002967.9"/>
</dbReference>
<dbReference type="RefSeq" id="WP_002680455.1">
    <property type="nucleotide sequence ID" value="NC_002967.9"/>
</dbReference>
<dbReference type="SMR" id="Q73JU6"/>
<dbReference type="STRING" id="243275.TDE_2489"/>
<dbReference type="PaxDb" id="243275-TDE_2489"/>
<dbReference type="GeneID" id="2741462"/>
<dbReference type="KEGG" id="tde:TDE_2489"/>
<dbReference type="PATRIC" id="fig|243275.7.peg.2355"/>
<dbReference type="eggNOG" id="COG0216">
    <property type="taxonomic scope" value="Bacteria"/>
</dbReference>
<dbReference type="HOGENOM" id="CLU_036856_0_1_12"/>
<dbReference type="OrthoDB" id="9806673at2"/>
<dbReference type="Proteomes" id="UP000008212">
    <property type="component" value="Chromosome"/>
</dbReference>
<dbReference type="GO" id="GO:0005737">
    <property type="term" value="C:cytoplasm"/>
    <property type="evidence" value="ECO:0007669"/>
    <property type="project" value="UniProtKB-SubCell"/>
</dbReference>
<dbReference type="GO" id="GO:0016149">
    <property type="term" value="F:translation release factor activity, codon specific"/>
    <property type="evidence" value="ECO:0007669"/>
    <property type="project" value="UniProtKB-UniRule"/>
</dbReference>
<dbReference type="FunFam" id="3.30.160.20:FF:000004">
    <property type="entry name" value="Peptide chain release factor 1"/>
    <property type="match status" value="1"/>
</dbReference>
<dbReference type="FunFam" id="3.30.70.1660:FF:000002">
    <property type="entry name" value="Peptide chain release factor 1"/>
    <property type="match status" value="1"/>
</dbReference>
<dbReference type="FunFam" id="3.30.70.1660:FF:000004">
    <property type="entry name" value="Peptide chain release factor 1"/>
    <property type="match status" value="1"/>
</dbReference>
<dbReference type="Gene3D" id="3.30.160.20">
    <property type="match status" value="1"/>
</dbReference>
<dbReference type="Gene3D" id="3.30.70.1660">
    <property type="match status" value="1"/>
</dbReference>
<dbReference type="Gene3D" id="6.10.140.1950">
    <property type="match status" value="1"/>
</dbReference>
<dbReference type="HAMAP" id="MF_00093">
    <property type="entry name" value="Rel_fac_1"/>
    <property type="match status" value="1"/>
</dbReference>
<dbReference type="InterPro" id="IPR005139">
    <property type="entry name" value="PCRF"/>
</dbReference>
<dbReference type="InterPro" id="IPR000352">
    <property type="entry name" value="Pep_chain_release_fac_I"/>
</dbReference>
<dbReference type="InterPro" id="IPR045853">
    <property type="entry name" value="Pep_chain_release_fac_I_sf"/>
</dbReference>
<dbReference type="InterPro" id="IPR050057">
    <property type="entry name" value="Prokaryotic/Mito_RF"/>
</dbReference>
<dbReference type="InterPro" id="IPR004373">
    <property type="entry name" value="RF-1"/>
</dbReference>
<dbReference type="NCBIfam" id="TIGR00019">
    <property type="entry name" value="prfA"/>
    <property type="match status" value="1"/>
</dbReference>
<dbReference type="NCBIfam" id="NF001859">
    <property type="entry name" value="PRK00591.1"/>
    <property type="match status" value="1"/>
</dbReference>
<dbReference type="PANTHER" id="PTHR43804">
    <property type="entry name" value="LD18447P"/>
    <property type="match status" value="1"/>
</dbReference>
<dbReference type="PANTHER" id="PTHR43804:SF7">
    <property type="entry name" value="LD18447P"/>
    <property type="match status" value="1"/>
</dbReference>
<dbReference type="Pfam" id="PF03462">
    <property type="entry name" value="PCRF"/>
    <property type="match status" value="1"/>
</dbReference>
<dbReference type="Pfam" id="PF00472">
    <property type="entry name" value="RF-1"/>
    <property type="match status" value="1"/>
</dbReference>
<dbReference type="SMART" id="SM00937">
    <property type="entry name" value="PCRF"/>
    <property type="match status" value="1"/>
</dbReference>
<dbReference type="SUPFAM" id="SSF75620">
    <property type="entry name" value="Release factor"/>
    <property type="match status" value="1"/>
</dbReference>
<dbReference type="PROSITE" id="PS00745">
    <property type="entry name" value="RF_PROK_I"/>
    <property type="match status" value="1"/>
</dbReference>
<protein>
    <recommendedName>
        <fullName evidence="1">Peptide chain release factor 1</fullName>
        <shortName evidence="1">RF-1</shortName>
    </recommendedName>
</protein>
<accession>Q73JU6</accession>